<name>ORF3_TTVD1</name>
<evidence type="ECO:0000256" key="1">
    <source>
        <dbReference type="SAM" id="MobiDB-lite"/>
    </source>
</evidence>
<protein>
    <recommendedName>
        <fullName>Uncharacterized ORF3 protein</fullName>
    </recommendedName>
</protein>
<sequence>MDPAKIWWHSCLLSHKSWCNCTEPRNHLPGWPTSEGTSTEDGDIITDAEMLTLAEDTEGLHTTNKPDKPTSTALPINHFQADFMTAFQNYLSPHHHKTLISTPCDPATMTRTESSQKKVSDALQTLLTLATEDILSPPSPQHQTRSRVPAGMRGRWAAKQLENPADAEKDAADHRRRRTRRQLRYRQRVTRSPPYPDLGEPLESSSSSDSLDAY</sequence>
<organismHost>
    <name type="scientific">Tupaia</name>
    <dbReference type="NCBI Taxonomy" id="9394"/>
</organismHost>
<gene>
    <name type="ORF">ORF3</name>
</gene>
<feature type="chain" id="PRO_0000404288" description="Uncharacterized ORF3 protein">
    <location>
        <begin position="1"/>
        <end position="214"/>
    </location>
</feature>
<feature type="region of interest" description="Disordered" evidence="1">
    <location>
        <begin position="131"/>
        <end position="214"/>
    </location>
</feature>
<feature type="compositionally biased region" description="Basic residues" evidence="1">
    <location>
        <begin position="174"/>
        <end position="189"/>
    </location>
</feature>
<feature type="compositionally biased region" description="Low complexity" evidence="1">
    <location>
        <begin position="197"/>
        <end position="214"/>
    </location>
</feature>
<keyword id="KW-1185">Reference proteome</keyword>
<dbReference type="EMBL" id="AB057358">
    <property type="protein sequence ID" value="BAB63951.1"/>
    <property type="molecule type" value="Genomic_DNA"/>
</dbReference>
<dbReference type="Proteomes" id="UP000006636">
    <property type="component" value="Segment"/>
</dbReference>
<organism>
    <name type="scientific">Torque teno tupaia virus (isolate Tbc-TTV14)</name>
    <dbReference type="NCBI Taxonomy" id="766185"/>
    <lineage>
        <taxon>Viruses</taxon>
        <taxon>Viruses incertae sedis</taxon>
        <taxon>Anelloviridae</taxon>
        <taxon>Deltatorquevirus</taxon>
        <taxon>Deltatorquevirus tupai1</taxon>
    </lineage>
</organism>
<proteinExistence type="predicted"/>
<reference key="1">
    <citation type="journal article" date="2001" name="J. Gen. Virol.">
        <title>Genomic and evolutionary characterization of TT virus (TTV) in tupaias and comparison with species-specific TTVs in humans and non-human primates.</title>
        <authorList>
            <person name="Okamoto H."/>
            <person name="Nishizawa T."/>
            <person name="Takahashi M."/>
            <person name="Tawara A."/>
            <person name="Peng Y."/>
            <person name="Kishimoto J."/>
            <person name="Wang Y."/>
        </authorList>
    </citation>
    <scope>NUCLEOTIDE SEQUENCE [GENOMIC DNA]</scope>
</reference>
<accession>Q91PQ3</accession>